<organism>
    <name type="scientific">Xanthomonas campestris pv. campestris (strain ATCC 33913 / DSM 3586 / NCPPB 528 / LMG 568 / P 25)</name>
    <dbReference type="NCBI Taxonomy" id="190485"/>
    <lineage>
        <taxon>Bacteria</taxon>
        <taxon>Pseudomonadati</taxon>
        <taxon>Pseudomonadota</taxon>
        <taxon>Gammaproteobacteria</taxon>
        <taxon>Lysobacterales</taxon>
        <taxon>Lysobacteraceae</taxon>
        <taxon>Xanthomonas</taxon>
    </lineage>
</organism>
<name>DADA_XANCP</name>
<proteinExistence type="inferred from homology"/>
<evidence type="ECO:0000255" key="1">
    <source>
        <dbReference type="HAMAP-Rule" id="MF_01202"/>
    </source>
</evidence>
<dbReference type="EC" id="1.4.99.-" evidence="1"/>
<dbReference type="EMBL" id="AE008922">
    <property type="protein sequence ID" value="AAM42918.1"/>
    <property type="molecule type" value="Genomic_DNA"/>
</dbReference>
<dbReference type="RefSeq" id="NP_638994.1">
    <property type="nucleotide sequence ID" value="NC_003902.1"/>
</dbReference>
<dbReference type="RefSeq" id="WP_011038731.1">
    <property type="nucleotide sequence ID" value="NC_003902.1"/>
</dbReference>
<dbReference type="SMR" id="Q8P4Q9"/>
<dbReference type="STRING" id="190485.XCC3648"/>
<dbReference type="EnsemblBacteria" id="AAM42918">
    <property type="protein sequence ID" value="AAM42918"/>
    <property type="gene ID" value="XCC3648"/>
</dbReference>
<dbReference type="KEGG" id="xcc:XCC3648"/>
<dbReference type="PATRIC" id="fig|190485.4.peg.3907"/>
<dbReference type="eggNOG" id="COG0665">
    <property type="taxonomic scope" value="Bacteria"/>
</dbReference>
<dbReference type="HOGENOM" id="CLU_007884_9_2_6"/>
<dbReference type="OrthoDB" id="9805337at2"/>
<dbReference type="Proteomes" id="UP000001010">
    <property type="component" value="Chromosome"/>
</dbReference>
<dbReference type="GO" id="GO:0005737">
    <property type="term" value="C:cytoplasm"/>
    <property type="evidence" value="ECO:0000318"/>
    <property type="project" value="GO_Central"/>
</dbReference>
<dbReference type="GO" id="GO:0005886">
    <property type="term" value="C:plasma membrane"/>
    <property type="evidence" value="ECO:0000318"/>
    <property type="project" value="GO_Central"/>
</dbReference>
<dbReference type="GO" id="GO:0008718">
    <property type="term" value="F:D-amino-acid dehydrogenase activity"/>
    <property type="evidence" value="ECO:0000318"/>
    <property type="project" value="GO_Central"/>
</dbReference>
<dbReference type="GO" id="GO:0055130">
    <property type="term" value="P:D-alanine catabolic process"/>
    <property type="evidence" value="ECO:0000318"/>
    <property type="project" value="GO_Central"/>
</dbReference>
<dbReference type="FunFam" id="3.50.50.60:FF:000020">
    <property type="entry name" value="D-amino acid dehydrogenase"/>
    <property type="match status" value="1"/>
</dbReference>
<dbReference type="Gene3D" id="3.30.9.10">
    <property type="entry name" value="D-Amino Acid Oxidase, subunit A, domain 2"/>
    <property type="match status" value="1"/>
</dbReference>
<dbReference type="Gene3D" id="3.50.50.60">
    <property type="entry name" value="FAD/NAD(P)-binding domain"/>
    <property type="match status" value="2"/>
</dbReference>
<dbReference type="HAMAP" id="MF_01202">
    <property type="entry name" value="DadA"/>
    <property type="match status" value="1"/>
</dbReference>
<dbReference type="InterPro" id="IPR023080">
    <property type="entry name" value="DadA"/>
</dbReference>
<dbReference type="InterPro" id="IPR006076">
    <property type="entry name" value="FAD-dep_OxRdtase"/>
</dbReference>
<dbReference type="InterPro" id="IPR036188">
    <property type="entry name" value="FAD/NAD-bd_sf"/>
</dbReference>
<dbReference type="NCBIfam" id="NF001933">
    <property type="entry name" value="PRK00711.1"/>
    <property type="match status" value="1"/>
</dbReference>
<dbReference type="PANTHER" id="PTHR13847:SF280">
    <property type="entry name" value="D-AMINO ACID DEHYDROGENASE"/>
    <property type="match status" value="1"/>
</dbReference>
<dbReference type="PANTHER" id="PTHR13847">
    <property type="entry name" value="SARCOSINE DEHYDROGENASE-RELATED"/>
    <property type="match status" value="1"/>
</dbReference>
<dbReference type="Pfam" id="PF01266">
    <property type="entry name" value="DAO"/>
    <property type="match status" value="1"/>
</dbReference>
<dbReference type="SUPFAM" id="SSF54373">
    <property type="entry name" value="FAD-linked reductases, C-terminal domain"/>
    <property type="match status" value="1"/>
</dbReference>
<dbReference type="SUPFAM" id="SSF51905">
    <property type="entry name" value="FAD/NAD(P)-binding domain"/>
    <property type="match status" value="1"/>
</dbReference>
<sequence length="429" mass="46660">MRVLILGSGVIGTTTAWYLAQSGCEVTVVDRQPASGLETSYANAGQLSFGYTSPWAAPGVPGKAVKWLFEQHAPLSIRPTRDLRQLAWLSQMLRNCTAERYAVNKARMVRLSDYSRDCLNALRASTGLEFEGRQLGTTQLFRTQQQLDAAAQDIEVLAQYGVPYELLSPAQIAQYEPGLAGGGAQMAGALHLPEDQTGDCRLFTQRLADLATQAGVQFRYGQQIERLEHAGGEITGVQIDGRLVTADRYVLALGSYSADLLLSLGLHLPVYPLKGYSLTIPIVDAQRAPTSTVLDESYKIALTRFDERIRVGGMAEVAGFDLSLNPRRRATLEMVVNDLFPGAGDLAQAEFWTGLRPATPDGTPVVGATPYANLFLNTGHGTLGWTMACGSGRYLADLMQGRTPEIDTEGLDVFRYLSTRSTRPHREAA</sequence>
<protein>
    <recommendedName>
        <fullName evidence="1">D-amino acid dehydrogenase</fullName>
        <ecNumber evidence="1">1.4.99.-</ecNumber>
    </recommendedName>
</protein>
<gene>
    <name evidence="1" type="primary">dadA</name>
    <name type="ordered locus">XCC3648</name>
</gene>
<comment type="function">
    <text evidence="1">Oxidative deamination of D-amino acids.</text>
</comment>
<comment type="catalytic activity">
    <reaction evidence="1">
        <text>a D-alpha-amino acid + A + H2O = a 2-oxocarboxylate + AH2 + NH4(+)</text>
        <dbReference type="Rhea" id="RHEA:18125"/>
        <dbReference type="ChEBI" id="CHEBI:13193"/>
        <dbReference type="ChEBI" id="CHEBI:15377"/>
        <dbReference type="ChEBI" id="CHEBI:17499"/>
        <dbReference type="ChEBI" id="CHEBI:28938"/>
        <dbReference type="ChEBI" id="CHEBI:35179"/>
        <dbReference type="ChEBI" id="CHEBI:59871"/>
    </reaction>
</comment>
<comment type="cofactor">
    <cofactor evidence="1">
        <name>FAD</name>
        <dbReference type="ChEBI" id="CHEBI:57692"/>
    </cofactor>
</comment>
<comment type="similarity">
    <text evidence="1">Belongs to the DadA oxidoreductase family.</text>
</comment>
<keyword id="KW-0274">FAD</keyword>
<keyword id="KW-0285">Flavoprotein</keyword>
<keyword id="KW-0560">Oxidoreductase</keyword>
<keyword id="KW-1185">Reference proteome</keyword>
<accession>Q8P4Q9</accession>
<feature type="chain" id="PRO_0000166156" description="D-amino acid dehydrogenase">
    <location>
        <begin position="1"/>
        <end position="429"/>
    </location>
</feature>
<feature type="binding site" evidence="1">
    <location>
        <begin position="3"/>
        <end position="17"/>
    </location>
    <ligand>
        <name>FAD</name>
        <dbReference type="ChEBI" id="CHEBI:57692"/>
    </ligand>
</feature>
<reference key="1">
    <citation type="journal article" date="2002" name="Nature">
        <title>Comparison of the genomes of two Xanthomonas pathogens with differing host specificities.</title>
        <authorList>
            <person name="da Silva A.C.R."/>
            <person name="Ferro J.A."/>
            <person name="Reinach F.C."/>
            <person name="Farah C.S."/>
            <person name="Furlan L.R."/>
            <person name="Quaggio R.B."/>
            <person name="Monteiro-Vitorello C.B."/>
            <person name="Van Sluys M.A."/>
            <person name="Almeida N.F. Jr."/>
            <person name="Alves L.M.C."/>
            <person name="do Amaral A.M."/>
            <person name="Bertolini M.C."/>
            <person name="Camargo L.E.A."/>
            <person name="Camarotte G."/>
            <person name="Cannavan F."/>
            <person name="Cardozo J."/>
            <person name="Chambergo F."/>
            <person name="Ciapina L.P."/>
            <person name="Cicarelli R.M.B."/>
            <person name="Coutinho L.L."/>
            <person name="Cursino-Santos J.R."/>
            <person name="El-Dorry H."/>
            <person name="Faria J.B."/>
            <person name="Ferreira A.J.S."/>
            <person name="Ferreira R.C.C."/>
            <person name="Ferro M.I.T."/>
            <person name="Formighieri E.F."/>
            <person name="Franco M.C."/>
            <person name="Greggio C.C."/>
            <person name="Gruber A."/>
            <person name="Katsuyama A.M."/>
            <person name="Kishi L.T."/>
            <person name="Leite R.P."/>
            <person name="Lemos E.G.M."/>
            <person name="Lemos M.V.F."/>
            <person name="Locali E.C."/>
            <person name="Machado M.A."/>
            <person name="Madeira A.M.B.N."/>
            <person name="Martinez-Rossi N.M."/>
            <person name="Martins E.C."/>
            <person name="Meidanis J."/>
            <person name="Menck C.F.M."/>
            <person name="Miyaki C.Y."/>
            <person name="Moon D.H."/>
            <person name="Moreira L.M."/>
            <person name="Novo M.T.M."/>
            <person name="Okura V.K."/>
            <person name="Oliveira M.C."/>
            <person name="Oliveira V.R."/>
            <person name="Pereira H.A."/>
            <person name="Rossi A."/>
            <person name="Sena J.A.D."/>
            <person name="Silva C."/>
            <person name="de Souza R.F."/>
            <person name="Spinola L.A.F."/>
            <person name="Takita M.A."/>
            <person name="Tamura R.E."/>
            <person name="Teixeira E.C."/>
            <person name="Tezza R.I.D."/>
            <person name="Trindade dos Santos M."/>
            <person name="Truffi D."/>
            <person name="Tsai S.M."/>
            <person name="White F.F."/>
            <person name="Setubal J.C."/>
            <person name="Kitajima J.P."/>
        </authorList>
    </citation>
    <scope>NUCLEOTIDE SEQUENCE [LARGE SCALE GENOMIC DNA]</scope>
    <source>
        <strain>ATCC 33913 / DSM 3586 / NCPPB 528 / LMG 568 / P 25</strain>
    </source>
</reference>